<comment type="function">
    <text evidence="1">Catalyzes the reversible isomerization of glucose-6-phosphate to fructose-6-phosphate.</text>
</comment>
<comment type="catalytic activity">
    <reaction evidence="1">
        <text>alpha-D-glucose 6-phosphate = beta-D-fructose 6-phosphate</text>
        <dbReference type="Rhea" id="RHEA:11816"/>
        <dbReference type="ChEBI" id="CHEBI:57634"/>
        <dbReference type="ChEBI" id="CHEBI:58225"/>
        <dbReference type="EC" id="5.3.1.9"/>
    </reaction>
</comment>
<comment type="pathway">
    <text evidence="1">Carbohydrate biosynthesis; gluconeogenesis.</text>
</comment>
<comment type="pathway">
    <text evidence="1">Carbohydrate degradation; glycolysis; D-glyceraldehyde 3-phosphate and glycerone phosphate from D-glucose: step 2/4.</text>
</comment>
<comment type="subcellular location">
    <subcellularLocation>
        <location evidence="1">Cytoplasm</location>
    </subcellularLocation>
</comment>
<comment type="similarity">
    <text evidence="1">Belongs to the GPI family.</text>
</comment>
<reference key="1">
    <citation type="journal article" date="2006" name="J. Bacteriol.">
        <title>Complete genome sequence of Yersinia pestis strains Antiqua and Nepal516: evidence of gene reduction in an emerging pathogen.</title>
        <authorList>
            <person name="Chain P.S.G."/>
            <person name="Hu P."/>
            <person name="Malfatti S.A."/>
            <person name="Radnedge L."/>
            <person name="Larimer F."/>
            <person name="Vergez L.M."/>
            <person name="Worsham P."/>
            <person name="Chu M.C."/>
            <person name="Andersen G.L."/>
        </authorList>
    </citation>
    <scope>NUCLEOTIDE SEQUENCE [LARGE SCALE GENOMIC DNA]</scope>
    <source>
        <strain>Nepal516</strain>
    </source>
</reference>
<reference key="2">
    <citation type="submission" date="2009-04" db="EMBL/GenBank/DDBJ databases">
        <title>Yersinia pestis Nepal516A whole genome shotgun sequencing project.</title>
        <authorList>
            <person name="Plunkett G. III"/>
            <person name="Anderson B.D."/>
            <person name="Baumler D.J."/>
            <person name="Burland V."/>
            <person name="Cabot E.L."/>
            <person name="Glasner J.D."/>
            <person name="Mau B."/>
            <person name="Neeno-Eckwall E."/>
            <person name="Perna N.T."/>
            <person name="Munk A.C."/>
            <person name="Tapia R."/>
            <person name="Green L.D."/>
            <person name="Rogers Y.C."/>
            <person name="Detter J.C."/>
            <person name="Bruce D.C."/>
            <person name="Brettin T.S."/>
        </authorList>
    </citation>
    <scope>NUCLEOTIDE SEQUENCE [LARGE SCALE GENOMIC DNA]</scope>
    <source>
        <strain>Nepal516</strain>
    </source>
</reference>
<evidence type="ECO:0000255" key="1">
    <source>
        <dbReference type="HAMAP-Rule" id="MF_00473"/>
    </source>
</evidence>
<gene>
    <name evidence="1" type="primary">pgi</name>
    <name type="ordered locus">YPN_0023</name>
    <name type="ORF">YP516_4559</name>
</gene>
<feature type="chain" id="PRO_1000014033" description="Glucose-6-phosphate isomerase">
    <location>
        <begin position="1"/>
        <end position="548"/>
    </location>
</feature>
<feature type="active site" description="Proton donor" evidence="1">
    <location>
        <position position="355"/>
    </location>
</feature>
<feature type="active site" evidence="1">
    <location>
        <position position="386"/>
    </location>
</feature>
<feature type="active site" evidence="1">
    <location>
        <position position="514"/>
    </location>
</feature>
<proteinExistence type="inferred from homology"/>
<name>G6PI_YERPN</name>
<keyword id="KW-0963">Cytoplasm</keyword>
<keyword id="KW-0312">Gluconeogenesis</keyword>
<keyword id="KW-0324">Glycolysis</keyword>
<keyword id="KW-0413">Isomerase</keyword>
<protein>
    <recommendedName>
        <fullName evidence="1">Glucose-6-phosphate isomerase</fullName>
        <shortName evidence="1">GPI</shortName>
        <ecNumber evidence="1">5.3.1.9</ecNumber>
    </recommendedName>
    <alternativeName>
        <fullName evidence="1">Phosphoglucose isomerase</fullName>
        <shortName evidence="1">PGI</shortName>
    </alternativeName>
    <alternativeName>
        <fullName evidence="1">Phosphohexose isomerase</fullName>
        <shortName evidence="1">PHI</shortName>
    </alternativeName>
</protein>
<accession>Q1CNS4</accession>
<accession>D1Q339</accession>
<dbReference type="EC" id="5.3.1.9" evidence="1"/>
<dbReference type="EMBL" id="CP000305">
    <property type="protein sequence ID" value="ABG16356.1"/>
    <property type="molecule type" value="Genomic_DNA"/>
</dbReference>
<dbReference type="EMBL" id="ACNQ01000019">
    <property type="protein sequence ID" value="EEO74942.1"/>
    <property type="molecule type" value="Genomic_DNA"/>
</dbReference>
<dbReference type="RefSeq" id="WP_002212085.1">
    <property type="nucleotide sequence ID" value="NZ_ACNQ01000019.1"/>
</dbReference>
<dbReference type="SMR" id="Q1CNS4"/>
<dbReference type="GeneID" id="57975003"/>
<dbReference type="KEGG" id="ypn:YPN_0023"/>
<dbReference type="HOGENOM" id="CLU_017947_3_1_6"/>
<dbReference type="UniPathway" id="UPA00109">
    <property type="reaction ID" value="UER00181"/>
</dbReference>
<dbReference type="UniPathway" id="UPA00138"/>
<dbReference type="Proteomes" id="UP000008936">
    <property type="component" value="Chromosome"/>
</dbReference>
<dbReference type="GO" id="GO:0005829">
    <property type="term" value="C:cytosol"/>
    <property type="evidence" value="ECO:0007669"/>
    <property type="project" value="TreeGrafter"/>
</dbReference>
<dbReference type="GO" id="GO:0097367">
    <property type="term" value="F:carbohydrate derivative binding"/>
    <property type="evidence" value="ECO:0007669"/>
    <property type="project" value="InterPro"/>
</dbReference>
<dbReference type="GO" id="GO:0004347">
    <property type="term" value="F:glucose-6-phosphate isomerase activity"/>
    <property type="evidence" value="ECO:0007669"/>
    <property type="project" value="UniProtKB-UniRule"/>
</dbReference>
<dbReference type="GO" id="GO:0048029">
    <property type="term" value="F:monosaccharide binding"/>
    <property type="evidence" value="ECO:0007669"/>
    <property type="project" value="TreeGrafter"/>
</dbReference>
<dbReference type="GO" id="GO:0006094">
    <property type="term" value="P:gluconeogenesis"/>
    <property type="evidence" value="ECO:0007669"/>
    <property type="project" value="UniProtKB-UniRule"/>
</dbReference>
<dbReference type="GO" id="GO:0051156">
    <property type="term" value="P:glucose 6-phosphate metabolic process"/>
    <property type="evidence" value="ECO:0007669"/>
    <property type="project" value="TreeGrafter"/>
</dbReference>
<dbReference type="GO" id="GO:0006096">
    <property type="term" value="P:glycolytic process"/>
    <property type="evidence" value="ECO:0007669"/>
    <property type="project" value="UniProtKB-UniRule"/>
</dbReference>
<dbReference type="CDD" id="cd05015">
    <property type="entry name" value="SIS_PGI_1"/>
    <property type="match status" value="1"/>
</dbReference>
<dbReference type="CDD" id="cd05016">
    <property type="entry name" value="SIS_PGI_2"/>
    <property type="match status" value="1"/>
</dbReference>
<dbReference type="FunFam" id="1.10.1390.10:FF:000001">
    <property type="entry name" value="Glucose-6-phosphate isomerase"/>
    <property type="match status" value="1"/>
</dbReference>
<dbReference type="FunFam" id="3.40.50.10490:FF:000004">
    <property type="entry name" value="Glucose-6-phosphate isomerase"/>
    <property type="match status" value="1"/>
</dbReference>
<dbReference type="Gene3D" id="1.10.1390.10">
    <property type="match status" value="1"/>
</dbReference>
<dbReference type="Gene3D" id="3.40.50.10490">
    <property type="entry name" value="Glucose-6-phosphate isomerase like protein, domain 1"/>
    <property type="match status" value="2"/>
</dbReference>
<dbReference type="HAMAP" id="MF_00473">
    <property type="entry name" value="G6P_isomerase"/>
    <property type="match status" value="1"/>
</dbReference>
<dbReference type="InterPro" id="IPR001672">
    <property type="entry name" value="G6P_Isomerase"/>
</dbReference>
<dbReference type="InterPro" id="IPR023096">
    <property type="entry name" value="G6P_Isomerase_C"/>
</dbReference>
<dbReference type="InterPro" id="IPR018189">
    <property type="entry name" value="Phosphoglucose_isomerase_CS"/>
</dbReference>
<dbReference type="InterPro" id="IPR046348">
    <property type="entry name" value="SIS_dom_sf"/>
</dbReference>
<dbReference type="InterPro" id="IPR035476">
    <property type="entry name" value="SIS_PGI_1"/>
</dbReference>
<dbReference type="InterPro" id="IPR035482">
    <property type="entry name" value="SIS_PGI_2"/>
</dbReference>
<dbReference type="NCBIfam" id="NF001211">
    <property type="entry name" value="PRK00179.1"/>
    <property type="match status" value="1"/>
</dbReference>
<dbReference type="PANTHER" id="PTHR11469">
    <property type="entry name" value="GLUCOSE-6-PHOSPHATE ISOMERASE"/>
    <property type="match status" value="1"/>
</dbReference>
<dbReference type="PANTHER" id="PTHR11469:SF1">
    <property type="entry name" value="GLUCOSE-6-PHOSPHATE ISOMERASE"/>
    <property type="match status" value="1"/>
</dbReference>
<dbReference type="Pfam" id="PF00342">
    <property type="entry name" value="PGI"/>
    <property type="match status" value="1"/>
</dbReference>
<dbReference type="PRINTS" id="PR00662">
    <property type="entry name" value="G6PISOMERASE"/>
</dbReference>
<dbReference type="SUPFAM" id="SSF53697">
    <property type="entry name" value="SIS domain"/>
    <property type="match status" value="1"/>
</dbReference>
<dbReference type="PROSITE" id="PS00765">
    <property type="entry name" value="P_GLUCOSE_ISOMERASE_1"/>
    <property type="match status" value="1"/>
</dbReference>
<dbReference type="PROSITE" id="PS00174">
    <property type="entry name" value="P_GLUCOSE_ISOMERASE_2"/>
    <property type="match status" value="1"/>
</dbReference>
<dbReference type="PROSITE" id="PS51463">
    <property type="entry name" value="P_GLUCOSE_ISOMERASE_3"/>
    <property type="match status" value="1"/>
</dbReference>
<sequence length="548" mass="61161">MKNINPSQTAAWKALQQHFEQMKDVTISSLFAKDDQRFNRFSATFDDQMLVDFSKNRITSETLEKLQDLAKETDLAGAIKSMFSGEKINRTEDRAVLHIALRNRSNTPIVVDGKDVMPEVNAVLAKMKQFCDRVISGDWKGYTGKAITDVVNIGIGGSDLGPYMVTEALRPYKNHLNMHFVSNVDGTHIAEALKPLNPETTLFLVASKTFTTQETMTNAHSARDWFLSAAGDPAHVAKHFAALSTNAKAVGEFGIDTNNMFEFWDWVGGRYSLWSAIGLSIALSVGFEHFEQLLSGAHAMDKHFAETPAEKNLPVLLALIGIWYNNFFGAETEAILPYDQYMHRFPAYFQQGNMESNGKYVDRNGHPVDYQTGPIIWGEPGTNGQHAFYQLIHQGTKLIPCDFIAPAISHNPLSDHHAKLLSNFFAQTEALAFGKSLEDVEAEFAAAGKTPEQVAHVAPFKVFEGNRPTNSILLREITPFSLGALIALYEHKIFTQGVILNIYTFDQWGVELGKQLANRILPELADDQEVTSHDSSTNALINRFKNWR</sequence>
<organism>
    <name type="scientific">Yersinia pestis bv. Antiqua (strain Nepal516)</name>
    <dbReference type="NCBI Taxonomy" id="377628"/>
    <lineage>
        <taxon>Bacteria</taxon>
        <taxon>Pseudomonadati</taxon>
        <taxon>Pseudomonadota</taxon>
        <taxon>Gammaproteobacteria</taxon>
        <taxon>Enterobacterales</taxon>
        <taxon>Yersiniaceae</taxon>
        <taxon>Yersinia</taxon>
    </lineage>
</organism>